<organism>
    <name type="scientific">Escherichia coli (strain UTI89 / UPEC)</name>
    <dbReference type="NCBI Taxonomy" id="364106"/>
    <lineage>
        <taxon>Bacteria</taxon>
        <taxon>Pseudomonadati</taxon>
        <taxon>Pseudomonadota</taxon>
        <taxon>Gammaproteobacteria</taxon>
        <taxon>Enterobacterales</taxon>
        <taxon>Enterobacteriaceae</taxon>
        <taxon>Escherichia</taxon>
    </lineage>
</organism>
<evidence type="ECO:0000255" key="1">
    <source>
        <dbReference type="HAMAP-Rule" id="MF_01848"/>
    </source>
</evidence>
<evidence type="ECO:0000305" key="2"/>
<feature type="chain" id="PRO_0000349909" description="Ribosomal RNA large subunit methyltransferase F">
    <location>
        <begin position="1"/>
        <end position="308"/>
    </location>
</feature>
<gene>
    <name evidence="1" type="primary">rlmF</name>
    <name type="ordered locus">UTI89_C0810</name>
</gene>
<proteinExistence type="inferred from homology"/>
<reference key="1">
    <citation type="journal article" date="2006" name="Proc. Natl. Acad. Sci. U.S.A.">
        <title>Identification of genes subject to positive selection in uropathogenic strains of Escherichia coli: a comparative genomics approach.</title>
        <authorList>
            <person name="Chen S.L."/>
            <person name="Hung C.-S."/>
            <person name="Xu J."/>
            <person name="Reigstad C.S."/>
            <person name="Magrini V."/>
            <person name="Sabo A."/>
            <person name="Blasiar D."/>
            <person name="Bieri T."/>
            <person name="Meyer R.R."/>
            <person name="Ozersky P."/>
            <person name="Armstrong J.R."/>
            <person name="Fulton R.S."/>
            <person name="Latreille J.P."/>
            <person name="Spieth J."/>
            <person name="Hooton T.M."/>
            <person name="Mardis E.R."/>
            <person name="Hultgren S.J."/>
            <person name="Gordon J.I."/>
        </authorList>
    </citation>
    <scope>NUCLEOTIDE SEQUENCE [LARGE SCALE GENOMIC DNA]</scope>
    <source>
        <strain>UTI89 / UPEC</strain>
    </source>
</reference>
<dbReference type="EC" id="2.1.1.181" evidence="1"/>
<dbReference type="EMBL" id="CP000243">
    <property type="protein sequence ID" value="ABE06296.1"/>
    <property type="status" value="ALT_INIT"/>
    <property type="molecule type" value="Genomic_DNA"/>
</dbReference>
<dbReference type="RefSeq" id="WP_001275941.1">
    <property type="nucleotide sequence ID" value="NZ_CP064825.1"/>
</dbReference>
<dbReference type="SMR" id="Q1REB8"/>
<dbReference type="GeneID" id="93776621"/>
<dbReference type="KEGG" id="eci:UTI89_C0810"/>
<dbReference type="HOGENOM" id="CLU_027534_3_0_6"/>
<dbReference type="Proteomes" id="UP000001952">
    <property type="component" value="Chromosome"/>
</dbReference>
<dbReference type="GO" id="GO:0005737">
    <property type="term" value="C:cytoplasm"/>
    <property type="evidence" value="ECO:0007669"/>
    <property type="project" value="UniProtKB-SubCell"/>
</dbReference>
<dbReference type="GO" id="GO:0052907">
    <property type="term" value="F:23S rRNA (adenine(1618)-N(6))-methyltransferase activity"/>
    <property type="evidence" value="ECO:0007669"/>
    <property type="project" value="UniProtKB-EC"/>
</dbReference>
<dbReference type="GO" id="GO:0070475">
    <property type="term" value="P:rRNA base methylation"/>
    <property type="evidence" value="ECO:0007669"/>
    <property type="project" value="TreeGrafter"/>
</dbReference>
<dbReference type="FunFam" id="3.40.50.150:FF:000045">
    <property type="entry name" value="Ribosomal RNA large subunit methyltransferase F"/>
    <property type="match status" value="1"/>
</dbReference>
<dbReference type="Gene3D" id="3.40.50.150">
    <property type="entry name" value="Vaccinia Virus protein VP39"/>
    <property type="match status" value="1"/>
</dbReference>
<dbReference type="HAMAP" id="MF_01848">
    <property type="entry name" value="23SrRNA_methyltr_F"/>
    <property type="match status" value="1"/>
</dbReference>
<dbReference type="InterPro" id="IPR010286">
    <property type="entry name" value="METTL16/RlmF"/>
</dbReference>
<dbReference type="InterPro" id="IPR016909">
    <property type="entry name" value="rRNA_lsu_MeTfrase_F"/>
</dbReference>
<dbReference type="InterPro" id="IPR029063">
    <property type="entry name" value="SAM-dependent_MTases_sf"/>
</dbReference>
<dbReference type="NCBIfam" id="NF008725">
    <property type="entry name" value="PRK11727.1"/>
    <property type="match status" value="1"/>
</dbReference>
<dbReference type="PANTHER" id="PTHR13393:SF0">
    <property type="entry name" value="RNA N6-ADENOSINE-METHYLTRANSFERASE METTL16"/>
    <property type="match status" value="1"/>
</dbReference>
<dbReference type="PANTHER" id="PTHR13393">
    <property type="entry name" value="SAM-DEPENDENT METHYLTRANSFERASE"/>
    <property type="match status" value="1"/>
</dbReference>
<dbReference type="Pfam" id="PF05971">
    <property type="entry name" value="Methyltransf_10"/>
    <property type="match status" value="1"/>
</dbReference>
<dbReference type="PIRSF" id="PIRSF029038">
    <property type="entry name" value="Mtase_YbiN_prd"/>
    <property type="match status" value="1"/>
</dbReference>
<dbReference type="SUPFAM" id="SSF53335">
    <property type="entry name" value="S-adenosyl-L-methionine-dependent methyltransferases"/>
    <property type="match status" value="1"/>
</dbReference>
<sequence>MSAQKPGLHPRNRHHSRYDLATLCQVNPELRQFLTLTPAGEQSVDFANPLAVKALNKALLAHFYAVANWDIPDGFLCPPVPGRADYIHHLADLLAEASGTIPANASILDIGVGANCIYPLIGVHEYGWRFTGSETSSQALSSAQAIISANPGLNRAIRLRRQKESGAIFNGIIHKNEQYDATLCNPPFHDSAAAARAGSERKRRNLGLNKDDALNFGGQQQELWCEGGEVAFIKKMIEESKGFAKQVMWFTSLVSRGENLPPLYRALTDVGAVKVVKKEMAQGQKQSRFIAWTFMNDEQRRRFVNRQR</sequence>
<accession>Q1REB8</accession>
<protein>
    <recommendedName>
        <fullName evidence="1">Ribosomal RNA large subunit methyltransferase F</fullName>
        <ecNumber evidence="1">2.1.1.181</ecNumber>
    </recommendedName>
    <alternativeName>
        <fullName evidence="1">23S rRNA mA1618 methyltransferase</fullName>
    </alternativeName>
    <alternativeName>
        <fullName evidence="1">rRNA adenine N-6-methyltransferase</fullName>
    </alternativeName>
</protein>
<name>RLMF_ECOUT</name>
<keyword id="KW-0963">Cytoplasm</keyword>
<keyword id="KW-0489">Methyltransferase</keyword>
<keyword id="KW-0698">rRNA processing</keyword>
<keyword id="KW-0949">S-adenosyl-L-methionine</keyword>
<keyword id="KW-0808">Transferase</keyword>
<comment type="function">
    <text evidence="1">Specifically methylates the adenine in position 1618 of 23S rRNA.</text>
</comment>
<comment type="catalytic activity">
    <reaction evidence="1">
        <text>adenosine(1618) in 23S rRNA + S-adenosyl-L-methionine = N(6)-methyladenosine(1618) in 23S rRNA + S-adenosyl-L-homocysteine + H(+)</text>
        <dbReference type="Rhea" id="RHEA:16497"/>
        <dbReference type="Rhea" id="RHEA-COMP:10229"/>
        <dbReference type="Rhea" id="RHEA-COMP:10231"/>
        <dbReference type="ChEBI" id="CHEBI:15378"/>
        <dbReference type="ChEBI" id="CHEBI:57856"/>
        <dbReference type="ChEBI" id="CHEBI:59789"/>
        <dbReference type="ChEBI" id="CHEBI:74411"/>
        <dbReference type="ChEBI" id="CHEBI:74449"/>
        <dbReference type="EC" id="2.1.1.181"/>
    </reaction>
</comment>
<comment type="subcellular location">
    <subcellularLocation>
        <location evidence="1">Cytoplasm</location>
    </subcellularLocation>
</comment>
<comment type="similarity">
    <text evidence="1">Belongs to the methyltransferase superfamily. METTL16/RlmF family.</text>
</comment>
<comment type="sequence caution" evidence="2">
    <conflict type="erroneous initiation">
        <sequence resource="EMBL-CDS" id="ABE06296"/>
    </conflict>
</comment>